<feature type="chain" id="PRO_0000269595" description="Hemin import ATP-binding protein HmuV">
    <location>
        <begin position="1"/>
        <end position="275"/>
    </location>
</feature>
<feature type="domain" description="ABC transporter" evidence="1">
    <location>
        <begin position="2"/>
        <end position="242"/>
    </location>
</feature>
<feature type="binding site" evidence="1">
    <location>
        <begin position="34"/>
        <end position="41"/>
    </location>
    <ligand>
        <name>ATP</name>
        <dbReference type="ChEBI" id="CHEBI:30616"/>
    </ligand>
</feature>
<keyword id="KW-0067">ATP-binding</keyword>
<keyword id="KW-0997">Cell inner membrane</keyword>
<keyword id="KW-1003">Cell membrane</keyword>
<keyword id="KW-0472">Membrane</keyword>
<keyword id="KW-0547">Nucleotide-binding</keyword>
<keyword id="KW-1185">Reference proteome</keyword>
<keyword id="KW-1278">Translocase</keyword>
<keyword id="KW-0813">Transport</keyword>
<organism>
    <name type="scientific">Gloeobacter violaceus (strain ATCC 29082 / PCC 7421)</name>
    <dbReference type="NCBI Taxonomy" id="251221"/>
    <lineage>
        <taxon>Bacteria</taxon>
        <taxon>Bacillati</taxon>
        <taxon>Cyanobacteriota</taxon>
        <taxon>Cyanophyceae</taxon>
        <taxon>Gloeobacterales</taxon>
        <taxon>Gloeobacteraceae</taxon>
        <taxon>Gloeobacter</taxon>
    </lineage>
</organism>
<name>HMUV_GLOVI</name>
<protein>
    <recommendedName>
        <fullName evidence="1">Hemin import ATP-binding protein HmuV</fullName>
        <ecNumber evidence="1">7.6.2.-</ecNumber>
    </recommendedName>
</protein>
<sequence>MLKAAGIGVRLAGRWLLEQVNLEALPGEVLAVVGPNGAGKSTLLKTLAGEIRPTRGSVSMAGKALADWPARERACVRAVLPQNSTLAFAFRVFEVVLMGRTPHSRGLEGERDRQIAREAMAAAGVAHLAERLYPTLSGGEKQRVQLARVLAQIWEAPPDSPRYLLLDEPTASLDLTHQHSTLAVARNFAHRGAAVVTVLHDLNLAAQYADRLALLKDGKLLVVGVPDIVLTPEWIETGFGLQTLVMRHPRLGCPLVIPLGSASVLQPGEQLAHGK</sequence>
<gene>
    <name evidence="1" type="primary">hmuV</name>
    <name type="ordered locus">gll0578</name>
</gene>
<reference key="1">
    <citation type="journal article" date="2003" name="DNA Res.">
        <title>Complete genome structure of Gloeobacter violaceus PCC 7421, a cyanobacterium that lacks thylakoids.</title>
        <authorList>
            <person name="Nakamura Y."/>
            <person name="Kaneko T."/>
            <person name="Sato S."/>
            <person name="Mimuro M."/>
            <person name="Miyashita H."/>
            <person name="Tsuchiya T."/>
            <person name="Sasamoto S."/>
            <person name="Watanabe A."/>
            <person name="Kawashima K."/>
            <person name="Kishida Y."/>
            <person name="Kiyokawa C."/>
            <person name="Kohara M."/>
            <person name="Matsumoto M."/>
            <person name="Matsuno A."/>
            <person name="Nakazaki N."/>
            <person name="Shimpo S."/>
            <person name="Takeuchi C."/>
            <person name="Yamada M."/>
            <person name="Tabata S."/>
        </authorList>
    </citation>
    <scope>NUCLEOTIDE SEQUENCE [LARGE SCALE GENOMIC DNA]</scope>
    <source>
        <strain>ATCC 29082 / PCC 7421</strain>
    </source>
</reference>
<comment type="function">
    <text evidence="1">Part of the ABC transporter complex HmuTUV involved in hemin import. Responsible for energy coupling to the transport system.</text>
</comment>
<comment type="subunit">
    <text evidence="1">The complex is composed of two ATP-binding proteins (HmuV), two transmembrane proteins (HmuU) and a solute-binding protein (HmuT).</text>
</comment>
<comment type="subcellular location">
    <subcellularLocation>
        <location evidence="1">Cell inner membrane</location>
        <topology evidence="1">Peripheral membrane protein</topology>
    </subcellularLocation>
</comment>
<comment type="similarity">
    <text evidence="1">Belongs to the ABC transporter superfamily. Heme (hemin) importer (TC 3.A.1.14.5) family.</text>
</comment>
<accession>Q7NN36</accession>
<dbReference type="EC" id="7.6.2.-" evidence="1"/>
<dbReference type="EMBL" id="BA000045">
    <property type="protein sequence ID" value="BAC88519.1"/>
    <property type="molecule type" value="Genomic_DNA"/>
</dbReference>
<dbReference type="RefSeq" id="NP_923524.1">
    <property type="nucleotide sequence ID" value="NC_005125.1"/>
</dbReference>
<dbReference type="RefSeq" id="WP_011140581.1">
    <property type="nucleotide sequence ID" value="NC_005125.1"/>
</dbReference>
<dbReference type="SMR" id="Q7NN36"/>
<dbReference type="STRING" id="251221.gene:10758051"/>
<dbReference type="EnsemblBacteria" id="BAC88519">
    <property type="protein sequence ID" value="BAC88519"/>
    <property type="gene ID" value="BAC88519"/>
</dbReference>
<dbReference type="KEGG" id="gvi:gll0578"/>
<dbReference type="PATRIC" id="fig|251221.4.peg.586"/>
<dbReference type="eggNOG" id="COG4559">
    <property type="taxonomic scope" value="Bacteria"/>
</dbReference>
<dbReference type="HOGENOM" id="CLU_000604_1_11_3"/>
<dbReference type="InParanoid" id="Q7NN36"/>
<dbReference type="OrthoDB" id="9806726at2"/>
<dbReference type="PhylomeDB" id="Q7NN36"/>
<dbReference type="Proteomes" id="UP000000557">
    <property type="component" value="Chromosome"/>
</dbReference>
<dbReference type="GO" id="GO:0005886">
    <property type="term" value="C:plasma membrane"/>
    <property type="evidence" value="ECO:0007669"/>
    <property type="project" value="UniProtKB-SubCell"/>
</dbReference>
<dbReference type="GO" id="GO:0005524">
    <property type="term" value="F:ATP binding"/>
    <property type="evidence" value="ECO:0007669"/>
    <property type="project" value="UniProtKB-KW"/>
</dbReference>
<dbReference type="GO" id="GO:0016887">
    <property type="term" value="F:ATP hydrolysis activity"/>
    <property type="evidence" value="ECO:0007669"/>
    <property type="project" value="InterPro"/>
</dbReference>
<dbReference type="CDD" id="cd03214">
    <property type="entry name" value="ABC_Iron-Siderophores_B12_Hemin"/>
    <property type="match status" value="1"/>
</dbReference>
<dbReference type="Gene3D" id="3.40.50.300">
    <property type="entry name" value="P-loop containing nucleotide triphosphate hydrolases"/>
    <property type="match status" value="1"/>
</dbReference>
<dbReference type="InterPro" id="IPR003593">
    <property type="entry name" value="AAA+_ATPase"/>
</dbReference>
<dbReference type="InterPro" id="IPR003439">
    <property type="entry name" value="ABC_transporter-like_ATP-bd"/>
</dbReference>
<dbReference type="InterPro" id="IPR017871">
    <property type="entry name" value="ABC_transporter-like_CS"/>
</dbReference>
<dbReference type="InterPro" id="IPR027417">
    <property type="entry name" value="P-loop_NTPase"/>
</dbReference>
<dbReference type="NCBIfam" id="NF010068">
    <property type="entry name" value="PRK13548.1"/>
    <property type="match status" value="1"/>
</dbReference>
<dbReference type="PANTHER" id="PTHR42794">
    <property type="entry name" value="HEMIN IMPORT ATP-BINDING PROTEIN HMUV"/>
    <property type="match status" value="1"/>
</dbReference>
<dbReference type="PANTHER" id="PTHR42794:SF1">
    <property type="entry name" value="HEMIN IMPORT ATP-BINDING PROTEIN HMUV"/>
    <property type="match status" value="1"/>
</dbReference>
<dbReference type="Pfam" id="PF00005">
    <property type="entry name" value="ABC_tran"/>
    <property type="match status" value="1"/>
</dbReference>
<dbReference type="SMART" id="SM00382">
    <property type="entry name" value="AAA"/>
    <property type="match status" value="1"/>
</dbReference>
<dbReference type="SUPFAM" id="SSF52540">
    <property type="entry name" value="P-loop containing nucleoside triphosphate hydrolases"/>
    <property type="match status" value="1"/>
</dbReference>
<dbReference type="PROSITE" id="PS00211">
    <property type="entry name" value="ABC_TRANSPORTER_1"/>
    <property type="match status" value="1"/>
</dbReference>
<dbReference type="PROSITE" id="PS50893">
    <property type="entry name" value="ABC_TRANSPORTER_2"/>
    <property type="match status" value="1"/>
</dbReference>
<dbReference type="PROSITE" id="PS51261">
    <property type="entry name" value="HMUV"/>
    <property type="match status" value="1"/>
</dbReference>
<proteinExistence type="inferred from homology"/>
<evidence type="ECO:0000255" key="1">
    <source>
        <dbReference type="HAMAP-Rule" id="MF_01718"/>
    </source>
</evidence>